<comment type="function">
    <text evidence="1">Located on the platform of the 30S subunit, it bridges several disparate RNA helices of the 16S rRNA. Forms part of the Shine-Dalgarno cleft in the 70S ribosome.</text>
</comment>
<comment type="subunit">
    <text evidence="1">Part of the 30S ribosomal subunit. Interacts with proteins S7 and S18. Binds to IF-3.</text>
</comment>
<comment type="similarity">
    <text evidence="1">Belongs to the universal ribosomal protein uS11 family.</text>
</comment>
<organism>
    <name type="scientific">Pseudomonas putida (strain GB-1)</name>
    <dbReference type="NCBI Taxonomy" id="76869"/>
    <lineage>
        <taxon>Bacteria</taxon>
        <taxon>Pseudomonadati</taxon>
        <taxon>Pseudomonadota</taxon>
        <taxon>Gammaproteobacteria</taxon>
        <taxon>Pseudomonadales</taxon>
        <taxon>Pseudomonadaceae</taxon>
        <taxon>Pseudomonas</taxon>
    </lineage>
</organism>
<feature type="chain" id="PRO_1000086202" description="Small ribosomal subunit protein uS11">
    <location>
        <begin position="1"/>
        <end position="129"/>
    </location>
</feature>
<proteinExistence type="inferred from homology"/>
<name>RS11_PSEPG</name>
<evidence type="ECO:0000255" key="1">
    <source>
        <dbReference type="HAMAP-Rule" id="MF_01310"/>
    </source>
</evidence>
<evidence type="ECO:0000305" key="2"/>
<accession>B0KK89</accession>
<dbReference type="EMBL" id="CP000926">
    <property type="protein sequence ID" value="ABY96417.1"/>
    <property type="molecule type" value="Genomic_DNA"/>
</dbReference>
<dbReference type="RefSeq" id="WP_012270237.1">
    <property type="nucleotide sequence ID" value="NC_010322.1"/>
</dbReference>
<dbReference type="SMR" id="B0KK89"/>
<dbReference type="GeneID" id="93675545"/>
<dbReference type="KEGG" id="ppg:PputGB1_0506"/>
<dbReference type="eggNOG" id="COG0100">
    <property type="taxonomic scope" value="Bacteria"/>
</dbReference>
<dbReference type="HOGENOM" id="CLU_072439_5_0_6"/>
<dbReference type="Proteomes" id="UP000002157">
    <property type="component" value="Chromosome"/>
</dbReference>
<dbReference type="GO" id="GO:1990904">
    <property type="term" value="C:ribonucleoprotein complex"/>
    <property type="evidence" value="ECO:0007669"/>
    <property type="project" value="UniProtKB-KW"/>
</dbReference>
<dbReference type="GO" id="GO:0005840">
    <property type="term" value="C:ribosome"/>
    <property type="evidence" value="ECO:0007669"/>
    <property type="project" value="UniProtKB-KW"/>
</dbReference>
<dbReference type="GO" id="GO:0019843">
    <property type="term" value="F:rRNA binding"/>
    <property type="evidence" value="ECO:0007669"/>
    <property type="project" value="UniProtKB-UniRule"/>
</dbReference>
<dbReference type="GO" id="GO:0003735">
    <property type="term" value="F:structural constituent of ribosome"/>
    <property type="evidence" value="ECO:0007669"/>
    <property type="project" value="InterPro"/>
</dbReference>
<dbReference type="GO" id="GO:0006412">
    <property type="term" value="P:translation"/>
    <property type="evidence" value="ECO:0007669"/>
    <property type="project" value="UniProtKB-UniRule"/>
</dbReference>
<dbReference type="FunFam" id="3.30.420.80:FF:000001">
    <property type="entry name" value="30S ribosomal protein S11"/>
    <property type="match status" value="1"/>
</dbReference>
<dbReference type="Gene3D" id="3.30.420.80">
    <property type="entry name" value="Ribosomal protein S11"/>
    <property type="match status" value="1"/>
</dbReference>
<dbReference type="HAMAP" id="MF_01310">
    <property type="entry name" value="Ribosomal_uS11"/>
    <property type="match status" value="1"/>
</dbReference>
<dbReference type="InterPro" id="IPR001971">
    <property type="entry name" value="Ribosomal_uS11"/>
</dbReference>
<dbReference type="InterPro" id="IPR019981">
    <property type="entry name" value="Ribosomal_uS11_bac-type"/>
</dbReference>
<dbReference type="InterPro" id="IPR018102">
    <property type="entry name" value="Ribosomal_uS11_CS"/>
</dbReference>
<dbReference type="InterPro" id="IPR036967">
    <property type="entry name" value="Ribosomal_uS11_sf"/>
</dbReference>
<dbReference type="NCBIfam" id="NF003698">
    <property type="entry name" value="PRK05309.1"/>
    <property type="match status" value="1"/>
</dbReference>
<dbReference type="NCBIfam" id="TIGR03632">
    <property type="entry name" value="uS11_bact"/>
    <property type="match status" value="1"/>
</dbReference>
<dbReference type="PANTHER" id="PTHR11759">
    <property type="entry name" value="40S RIBOSOMAL PROTEIN S14/30S RIBOSOMAL PROTEIN S11"/>
    <property type="match status" value="1"/>
</dbReference>
<dbReference type="Pfam" id="PF00411">
    <property type="entry name" value="Ribosomal_S11"/>
    <property type="match status" value="1"/>
</dbReference>
<dbReference type="PIRSF" id="PIRSF002131">
    <property type="entry name" value="Ribosomal_S11"/>
    <property type="match status" value="1"/>
</dbReference>
<dbReference type="SUPFAM" id="SSF53137">
    <property type="entry name" value="Translational machinery components"/>
    <property type="match status" value="1"/>
</dbReference>
<dbReference type="PROSITE" id="PS00054">
    <property type="entry name" value="RIBOSOMAL_S11"/>
    <property type="match status" value="1"/>
</dbReference>
<gene>
    <name evidence="1" type="primary">rpsK</name>
    <name type="ordered locus">PputGB1_0506</name>
</gene>
<protein>
    <recommendedName>
        <fullName evidence="1">Small ribosomal subunit protein uS11</fullName>
    </recommendedName>
    <alternativeName>
        <fullName evidence="2">30S ribosomal protein S11</fullName>
    </alternativeName>
</protein>
<sequence>MAKPAARPRKKIKKTVVDGIAHIHASFNNTIVTITDRQGNALSWATSGGSGFRGSRKSTPFAAQIAAERAGQAALEYGLKNLDVNVKGPGPGRESAVRALNSCGYKIASITDVTPIPHNGCRPPKKRRV</sequence>
<reference key="1">
    <citation type="submission" date="2008-01" db="EMBL/GenBank/DDBJ databases">
        <title>Complete sequence of Pseudomonas putida GB-1.</title>
        <authorList>
            <consortium name="US DOE Joint Genome Institute"/>
            <person name="Copeland A."/>
            <person name="Lucas S."/>
            <person name="Lapidus A."/>
            <person name="Barry K."/>
            <person name="Glavina del Rio T."/>
            <person name="Dalin E."/>
            <person name="Tice H."/>
            <person name="Pitluck S."/>
            <person name="Bruce D."/>
            <person name="Goodwin L."/>
            <person name="Chertkov O."/>
            <person name="Brettin T."/>
            <person name="Detter J.C."/>
            <person name="Han C."/>
            <person name="Kuske C.R."/>
            <person name="Schmutz J."/>
            <person name="Larimer F."/>
            <person name="Land M."/>
            <person name="Hauser L."/>
            <person name="Kyrpides N."/>
            <person name="Kim E."/>
            <person name="McCarthy J.K."/>
            <person name="Richardson P."/>
        </authorList>
    </citation>
    <scope>NUCLEOTIDE SEQUENCE [LARGE SCALE GENOMIC DNA]</scope>
    <source>
        <strain>GB-1</strain>
    </source>
</reference>
<keyword id="KW-0687">Ribonucleoprotein</keyword>
<keyword id="KW-0689">Ribosomal protein</keyword>
<keyword id="KW-0694">RNA-binding</keyword>
<keyword id="KW-0699">rRNA-binding</keyword>